<accession>A6NN90</accession>
<accession>A0A087WXZ4</accession>
<feature type="chain" id="PRO_0000328766" description="Uncharacterized protein C2orf81">
    <location>
        <begin position="1"/>
        <end position="582"/>
    </location>
</feature>
<feature type="region of interest" description="Disordered" evidence="2">
    <location>
        <begin position="1"/>
        <end position="29"/>
    </location>
</feature>
<feature type="region of interest" description="Disordered" evidence="2">
    <location>
        <begin position="110"/>
        <end position="133"/>
    </location>
</feature>
<feature type="region of interest" description="Disordered" evidence="2">
    <location>
        <begin position="147"/>
        <end position="221"/>
    </location>
</feature>
<feature type="region of interest" description="Disordered" evidence="2">
    <location>
        <begin position="310"/>
        <end position="331"/>
    </location>
</feature>
<feature type="region of interest" description="Disordered" evidence="2">
    <location>
        <begin position="551"/>
        <end position="582"/>
    </location>
</feature>
<feature type="compositionally biased region" description="Basic and acidic residues" evidence="2">
    <location>
        <begin position="1"/>
        <end position="23"/>
    </location>
</feature>
<feature type="compositionally biased region" description="Polar residues" evidence="2">
    <location>
        <begin position="311"/>
        <end position="320"/>
    </location>
</feature>
<feature type="modified residue" description="Phosphoserine" evidence="1">
    <location>
        <position position="242"/>
    </location>
</feature>
<name>CB081_HUMAN</name>
<reference key="1">
    <citation type="journal article" date="2005" name="Nature">
        <title>Generation and annotation of the DNA sequences of human chromosomes 2 and 4.</title>
        <authorList>
            <person name="Hillier L.W."/>
            <person name="Graves T.A."/>
            <person name="Fulton R.S."/>
            <person name="Fulton L.A."/>
            <person name="Pepin K.H."/>
            <person name="Minx P."/>
            <person name="Wagner-McPherson C."/>
            <person name="Layman D."/>
            <person name="Wylie K."/>
            <person name="Sekhon M."/>
            <person name="Becker M.C."/>
            <person name="Fewell G.A."/>
            <person name="Delehaunty K.D."/>
            <person name="Miner T.L."/>
            <person name="Nash W.E."/>
            <person name="Kremitzki C."/>
            <person name="Oddy L."/>
            <person name="Du H."/>
            <person name="Sun H."/>
            <person name="Bradshaw-Cordum H."/>
            <person name="Ali J."/>
            <person name="Carter J."/>
            <person name="Cordes M."/>
            <person name="Harris A."/>
            <person name="Isak A."/>
            <person name="van Brunt A."/>
            <person name="Nguyen C."/>
            <person name="Du F."/>
            <person name="Courtney L."/>
            <person name="Kalicki J."/>
            <person name="Ozersky P."/>
            <person name="Abbott S."/>
            <person name="Armstrong J."/>
            <person name="Belter E.A."/>
            <person name="Caruso L."/>
            <person name="Cedroni M."/>
            <person name="Cotton M."/>
            <person name="Davidson T."/>
            <person name="Desai A."/>
            <person name="Elliott G."/>
            <person name="Erb T."/>
            <person name="Fronick C."/>
            <person name="Gaige T."/>
            <person name="Haakenson W."/>
            <person name="Haglund K."/>
            <person name="Holmes A."/>
            <person name="Harkins R."/>
            <person name="Kim K."/>
            <person name="Kruchowski S.S."/>
            <person name="Strong C.M."/>
            <person name="Grewal N."/>
            <person name="Goyea E."/>
            <person name="Hou S."/>
            <person name="Levy A."/>
            <person name="Martinka S."/>
            <person name="Mead K."/>
            <person name="McLellan M.D."/>
            <person name="Meyer R."/>
            <person name="Randall-Maher J."/>
            <person name="Tomlinson C."/>
            <person name="Dauphin-Kohlberg S."/>
            <person name="Kozlowicz-Reilly A."/>
            <person name="Shah N."/>
            <person name="Swearengen-Shahid S."/>
            <person name="Snider J."/>
            <person name="Strong J.T."/>
            <person name="Thompson J."/>
            <person name="Yoakum M."/>
            <person name="Leonard S."/>
            <person name="Pearman C."/>
            <person name="Trani L."/>
            <person name="Radionenko M."/>
            <person name="Waligorski J.E."/>
            <person name="Wang C."/>
            <person name="Rock S.M."/>
            <person name="Tin-Wollam A.-M."/>
            <person name="Maupin R."/>
            <person name="Latreille P."/>
            <person name="Wendl M.C."/>
            <person name="Yang S.-P."/>
            <person name="Pohl C."/>
            <person name="Wallis J.W."/>
            <person name="Spieth J."/>
            <person name="Bieri T.A."/>
            <person name="Berkowicz N."/>
            <person name="Nelson J.O."/>
            <person name="Osborne J."/>
            <person name="Ding L."/>
            <person name="Meyer R."/>
            <person name="Sabo A."/>
            <person name="Shotland Y."/>
            <person name="Sinha P."/>
            <person name="Wohldmann P.E."/>
            <person name="Cook L.L."/>
            <person name="Hickenbotham M.T."/>
            <person name="Eldred J."/>
            <person name="Williams D."/>
            <person name="Jones T.A."/>
            <person name="She X."/>
            <person name="Ciccarelli F.D."/>
            <person name="Izaurralde E."/>
            <person name="Taylor J."/>
            <person name="Schmutz J."/>
            <person name="Myers R.M."/>
            <person name="Cox D.R."/>
            <person name="Huang X."/>
            <person name="McPherson J.D."/>
            <person name="Mardis E.R."/>
            <person name="Clifton S.W."/>
            <person name="Warren W.C."/>
            <person name="Chinwalla A.T."/>
            <person name="Eddy S.R."/>
            <person name="Marra M.A."/>
            <person name="Ovcharenko I."/>
            <person name="Furey T.S."/>
            <person name="Miller W."/>
            <person name="Eichler E.E."/>
            <person name="Bork P."/>
            <person name="Suyama M."/>
            <person name="Torrents D."/>
            <person name="Waterston R.H."/>
            <person name="Wilson R.K."/>
        </authorList>
    </citation>
    <scope>NUCLEOTIDE SEQUENCE [LARGE SCALE GENOMIC DNA]</scope>
</reference>
<keyword id="KW-0597">Phosphoprotein</keyword>
<keyword id="KW-1267">Proteomics identification</keyword>
<keyword id="KW-1185">Reference proteome</keyword>
<gene>
    <name evidence="4" type="primary">C2orf81</name>
</gene>
<sequence>MAHEGSRQVRDRGVTRSKAEKVRPPTVPVPQVDIVPGRLSEAEWMALTALEEGEDVVGDILADLLARVMDSAFKVYLTQQCIPFTISQAREAMLQITEWRFLARDEGESAVAEDPTWGEDEEPSACTTDSWAQGSVPVLHASTSEGLENFQGEDPGGVDRIPLGRSWMGRGSQEQMESWEPSPQLRVTSAPPPTSELFQEAGPGGPVEEADGQSRGLSSAGSLSASFQLSVEEAPADDADPSLDPYLVASPQASTGRGHPLGFHLSLEDLYCCMPQLDAAGDRLELRSEGVPCIASGVLVSYPSVGGATRPSASCQQQRAGHSDVRLSAHHHRMRRKAAVKRLDPARLPCHWVRPLAEVLVPDSQTRPLEAYRGRQRGEKTKARAEPQALGPGTRVSPAAFFPLRPGIPFRDLDSGPALLFPTLNLGLSSPSLESKLPLPNSRIRFLTTHPVLPDVARSRSPKLWPSVRWPSGWEGKAELLGELWAGRTRVPPQGLELADREGQDPGRWPRTTPPVLEATSQVMWKPVLLPEALKLAPGVSMWNRSTQVLLSSGVPEQEDKEGSTFPPVEQHPIQTGAPKPR</sequence>
<dbReference type="EMBL" id="AC005041">
    <property type="status" value="NOT_ANNOTATED_CDS"/>
    <property type="molecule type" value="Genomic_DNA"/>
</dbReference>
<dbReference type="FunCoup" id="A6NN90">
    <property type="interactions" value="22"/>
</dbReference>
<dbReference type="STRING" id="9606.ENSP00000491941"/>
<dbReference type="GlyGen" id="A6NN90">
    <property type="glycosylation" value="1 site"/>
</dbReference>
<dbReference type="PhosphoSitePlus" id="A6NN90"/>
<dbReference type="BioMuta" id="C2orf81"/>
<dbReference type="MassIVE" id="A6NN90"/>
<dbReference type="PaxDb" id="9606-ENSP00000290390"/>
<dbReference type="PeptideAtlas" id="A6NN90"/>
<dbReference type="ProteomicsDB" id="1589"/>
<dbReference type="Antibodypedia" id="78613">
    <property type="antibodies" value="3 antibodies from 3 providers"/>
</dbReference>
<dbReference type="Ensembl" id="ENST00000612891.4">
    <property type="protein sequence ID" value="ENSP00000481409.1"/>
    <property type="gene ID" value="ENSG00000284308.2"/>
</dbReference>
<dbReference type="AGR" id="HGNC:34350"/>
<dbReference type="GeneCards" id="C2orf81"/>
<dbReference type="HGNC" id="HGNC:34350">
    <property type="gene designation" value="C2orf81"/>
</dbReference>
<dbReference type="HPA" id="ENSG00000284308">
    <property type="expression patterns" value="Tissue enhanced (fallopian tube, testis)"/>
</dbReference>
<dbReference type="neXtProt" id="NX_A6NN90"/>
<dbReference type="VEuPathDB" id="HostDB:ENSG00000284308"/>
<dbReference type="eggNOG" id="KOG1208">
    <property type="taxonomic scope" value="Eukaryota"/>
</dbReference>
<dbReference type="GeneTree" id="ENSGT00390000014979"/>
<dbReference type="InParanoid" id="A6NN90"/>
<dbReference type="OrthoDB" id="193650at2759"/>
<dbReference type="PAN-GO" id="A6NN90">
    <property type="GO annotations" value="0 GO annotations based on evolutionary models"/>
</dbReference>
<dbReference type="PhylomeDB" id="A6NN90"/>
<dbReference type="PathwayCommons" id="A6NN90"/>
<dbReference type="ChiTaRS" id="C2orf81">
    <property type="organism name" value="human"/>
</dbReference>
<dbReference type="Pharos" id="A6NN90">
    <property type="development level" value="Tdark"/>
</dbReference>
<dbReference type="PRO" id="PR:A6NN90"/>
<dbReference type="Proteomes" id="UP000005640">
    <property type="component" value="Chromosome 2"/>
</dbReference>
<dbReference type="RNAct" id="A6NN90">
    <property type="molecule type" value="protein"/>
</dbReference>
<dbReference type="Bgee" id="ENSG00000284308">
    <property type="expression patterns" value="Expressed in right uterine tube and 102 other cell types or tissues"/>
</dbReference>
<dbReference type="ExpressionAtlas" id="A6NN90">
    <property type="expression patterns" value="baseline and differential"/>
</dbReference>
<dbReference type="InterPro" id="IPR028042">
    <property type="entry name" value="DUF4639"/>
</dbReference>
<dbReference type="PANTHER" id="PTHR34438:SF1">
    <property type="entry name" value="CHROMOSOME 2 OPEN READING FRAME 81"/>
    <property type="match status" value="1"/>
</dbReference>
<dbReference type="PANTHER" id="PTHR34438">
    <property type="entry name" value="SI:DKEY-97L20.6"/>
    <property type="match status" value="1"/>
</dbReference>
<dbReference type="Pfam" id="PF15479">
    <property type="entry name" value="DUF4639"/>
    <property type="match status" value="1"/>
</dbReference>
<organism>
    <name type="scientific">Homo sapiens</name>
    <name type="common">Human</name>
    <dbReference type="NCBI Taxonomy" id="9606"/>
    <lineage>
        <taxon>Eukaryota</taxon>
        <taxon>Metazoa</taxon>
        <taxon>Chordata</taxon>
        <taxon>Craniata</taxon>
        <taxon>Vertebrata</taxon>
        <taxon>Euteleostomi</taxon>
        <taxon>Mammalia</taxon>
        <taxon>Eutheria</taxon>
        <taxon>Euarchontoglires</taxon>
        <taxon>Primates</taxon>
        <taxon>Haplorrhini</taxon>
        <taxon>Catarrhini</taxon>
        <taxon>Hominidae</taxon>
        <taxon>Homo</taxon>
    </lineage>
</organism>
<evidence type="ECO:0000250" key="1">
    <source>
        <dbReference type="UniProtKB" id="Q6AXP4"/>
    </source>
</evidence>
<evidence type="ECO:0000256" key="2">
    <source>
        <dbReference type="SAM" id="MobiDB-lite"/>
    </source>
</evidence>
<evidence type="ECO:0000305" key="3"/>
<evidence type="ECO:0000312" key="4">
    <source>
        <dbReference type="HGNC" id="HGNC:34350"/>
    </source>
</evidence>
<proteinExistence type="evidence at protein level"/>
<protein>
    <recommendedName>
        <fullName evidence="3">Uncharacterized protein C2orf81</fullName>
    </recommendedName>
</protein>